<feature type="initiator methionine" description="Removed" evidence="2">
    <location>
        <position position="1"/>
    </location>
</feature>
<feature type="chain" id="PRO_0000253948" description="Histone H3.1">
    <location>
        <begin position="2"/>
        <end position="136"/>
    </location>
</feature>
<feature type="region of interest" description="Disordered" evidence="8">
    <location>
        <begin position="1"/>
        <end position="43"/>
    </location>
</feature>
<feature type="modified residue" description="Asymmetric dimethylarginine; by PRMT6; alternate" evidence="2">
    <location>
        <position position="3"/>
    </location>
</feature>
<feature type="modified residue" description="Citrulline; alternate" evidence="2">
    <location>
        <position position="3"/>
    </location>
</feature>
<feature type="modified residue" description="Phosphothreonine; by HASPIN and VRK1" evidence="2">
    <location>
        <position position="4"/>
    </location>
</feature>
<feature type="modified residue" description="Allysine; alternate" evidence="2">
    <location>
        <position position="5"/>
    </location>
</feature>
<feature type="modified residue" description="N6,N6,N6-trimethyllysine; alternate" evidence="2">
    <location>
        <position position="5"/>
    </location>
</feature>
<feature type="modified residue" description="N6,N6-dimethyllysine; alternate" evidence="2">
    <location>
        <position position="5"/>
    </location>
</feature>
<feature type="modified residue" description="N6-(2-hydroxyisobutyryl)lysine; alternate" evidence="2">
    <location>
        <position position="5"/>
    </location>
</feature>
<feature type="modified residue" description="N6-(beta-hydroxybutyryl)lysine; alternate" evidence="4">
    <location>
        <position position="5"/>
    </location>
</feature>
<feature type="modified residue" description="N6-acetyllysine; alternate" evidence="2">
    <location>
        <position position="5"/>
    </location>
</feature>
<feature type="modified residue" description="N6-crotonyllysine; alternate" evidence="2">
    <location>
        <position position="5"/>
    </location>
</feature>
<feature type="modified residue" description="N6-methyllysine; alternate" evidence="2">
    <location>
        <position position="5"/>
    </location>
</feature>
<feature type="modified residue" description="5-glutamyl dopamine; alternate" evidence="2">
    <location>
        <position position="6"/>
    </location>
</feature>
<feature type="modified residue" description="5-glutamyl serotonin; alternate" evidence="2">
    <location>
        <position position="6"/>
    </location>
</feature>
<feature type="modified residue" description="Phosphothreonine; by PKC" evidence="2">
    <location>
        <position position="7"/>
    </location>
</feature>
<feature type="modified residue" description="Citrulline; alternate" evidence="2">
    <location>
        <position position="9"/>
    </location>
</feature>
<feature type="modified residue" description="Symmetric dimethylarginine; by PRMT5; alternate" evidence="4">
    <location>
        <position position="9"/>
    </location>
</feature>
<feature type="modified residue" description="N6,N6,N6-trimethyllysine; alternate" evidence="3">
    <location>
        <position position="10"/>
    </location>
</feature>
<feature type="modified residue" description="N6,N6-dimethyllysine; alternate" evidence="3">
    <location>
        <position position="10"/>
    </location>
</feature>
<feature type="modified residue" description="N6-(2-hydroxyisobutyryl)lysine; alternate" evidence="2">
    <location>
        <position position="10"/>
    </location>
</feature>
<feature type="modified residue" description="N6-(beta-hydroxybutyryl)lysine; alternate" evidence="4">
    <location>
        <position position="10"/>
    </location>
</feature>
<feature type="modified residue" description="N6-acetyllysine; alternate" evidence="2">
    <location>
        <position position="10"/>
    </location>
</feature>
<feature type="modified residue" description="N6-crotonyllysine; alternate" evidence="2">
    <location>
        <position position="10"/>
    </location>
</feature>
<feature type="modified residue" description="N6-lactoyllysine; alternate" evidence="2">
    <location>
        <position position="10"/>
    </location>
</feature>
<feature type="modified residue" description="N6-methyllysine; alternate" evidence="3">
    <location>
        <position position="10"/>
    </location>
</feature>
<feature type="modified residue" description="ADP-ribosylserine; alternate" evidence="2">
    <location>
        <position position="11"/>
    </location>
</feature>
<feature type="modified residue" description="Phosphoserine; alternate; by AURKB, AURKC, RPS6KA3, RPS6KA4 and RPS6KA5" evidence="3">
    <location>
        <position position="11"/>
    </location>
</feature>
<feature type="modified residue" description="Phosphothreonine; by PKC and CHEK1" evidence="2">
    <location>
        <position position="12"/>
    </location>
</feature>
<feature type="modified residue" description="N6-(2-hydroxyisobutyryl)lysine; alternate" evidence="2">
    <location>
        <position position="15"/>
    </location>
</feature>
<feature type="modified residue" description="N6-(beta-hydroxybutyryl)lysine; alternate" evidence="4">
    <location>
        <position position="15"/>
    </location>
</feature>
<feature type="modified residue" description="N6-acetyllysine; alternate" evidence="3">
    <location>
        <position position="15"/>
    </location>
</feature>
<feature type="modified residue" description="N6-glutaryllysine; alternate" evidence="2">
    <location>
        <position position="15"/>
    </location>
</feature>
<feature type="modified residue" description="N6-lactoyllysine; alternate" evidence="4">
    <location>
        <position position="15"/>
    </location>
</feature>
<feature type="modified residue" description="N6-succinyllysine; alternate" evidence="2">
    <location>
        <position position="15"/>
    </location>
</feature>
<feature type="modified residue" description="Asymmetric dimethylarginine; by CARM1; alternate" evidence="2">
    <location>
        <position position="18"/>
    </location>
</feature>
<feature type="modified residue" description="Citrulline; alternate" evidence="2">
    <location>
        <position position="18"/>
    </location>
</feature>
<feature type="modified residue" description="N6-(2-hydroxyisobutyryl)lysine; alternate" evidence="2">
    <location>
        <position position="19"/>
    </location>
</feature>
<feature type="modified residue" description="N6-(beta-hydroxybutyryl)lysine; alternate" evidence="4">
    <location>
        <position position="19"/>
    </location>
</feature>
<feature type="modified residue" description="N6-acetyllysine; alternate" evidence="2">
    <location>
        <position position="19"/>
    </location>
</feature>
<feature type="modified residue" description="N6-butyryllysine; alternate" evidence="4">
    <location>
        <position position="19"/>
    </location>
</feature>
<feature type="modified residue" description="N6-crotonyllysine; alternate" evidence="2">
    <location>
        <position position="19"/>
    </location>
</feature>
<feature type="modified residue" description="N6-glutaryllysine; alternate" evidence="2">
    <location>
        <position position="19"/>
    </location>
</feature>
<feature type="modified residue" description="N6-lactoyllysine; alternate" evidence="2">
    <location>
        <position position="19"/>
    </location>
</feature>
<feature type="modified residue" description="N6-methyllysine; alternate" evidence="2">
    <location>
        <position position="19"/>
    </location>
</feature>
<feature type="modified residue" description="N6-(2-hydroxyisobutyryl)lysine; alternate" evidence="2">
    <location>
        <position position="24"/>
    </location>
</feature>
<feature type="modified residue" description="N6-(beta-hydroxybutyryl)lysine; alternate" evidence="4">
    <location>
        <position position="24"/>
    </location>
</feature>
<feature type="modified residue" description="N6-acetyllysine; alternate" evidence="3">
    <location>
        <position position="24"/>
    </location>
</feature>
<feature type="modified residue" description="N6-butyryllysine; alternate" evidence="4">
    <location>
        <position position="24"/>
    </location>
</feature>
<feature type="modified residue" description="N6-crotonyllysine; alternate" evidence="2">
    <location>
        <position position="24"/>
    </location>
</feature>
<feature type="modified residue" description="N6-glutaryllysine; alternate" evidence="2">
    <location>
        <position position="24"/>
    </location>
</feature>
<feature type="modified residue" description="N6-lactoyllysine; alternate" evidence="2">
    <location>
        <position position="24"/>
    </location>
</feature>
<feature type="modified residue" description="N6-methyllysine; alternate" evidence="2">
    <location>
        <position position="24"/>
    </location>
</feature>
<feature type="modified residue" description="Citrulline" evidence="2">
    <location>
        <position position="27"/>
    </location>
</feature>
<feature type="modified residue" description="N6,N6,N6-trimethyllysine; alternate" evidence="3">
    <location>
        <position position="28"/>
    </location>
</feature>
<feature type="modified residue" description="N6,N6-dimethyllysine; alternate" evidence="3">
    <location>
        <position position="28"/>
    </location>
</feature>
<feature type="modified residue" description="N6-(2-hydroxyisobutyryl)lysine; alternate" evidence="2">
    <location>
        <position position="28"/>
    </location>
</feature>
<feature type="modified residue" description="N6-acetyllysine; alternate" evidence="2">
    <location>
        <position position="28"/>
    </location>
</feature>
<feature type="modified residue" description="N6-crotonyllysine; alternate" evidence="2">
    <location>
        <position position="28"/>
    </location>
</feature>
<feature type="modified residue" description="N6-glutaryllysine; alternate" evidence="2">
    <location>
        <position position="28"/>
    </location>
</feature>
<feature type="modified residue" description="N6-lactoyllysine; alternate" evidence="2">
    <location>
        <position position="28"/>
    </location>
</feature>
<feature type="modified residue" description="N6-methyllysine; alternate" evidence="3">
    <location>
        <position position="28"/>
    </location>
</feature>
<feature type="modified residue" description="ADP-ribosylserine; alternate" evidence="2">
    <location>
        <position position="29"/>
    </location>
</feature>
<feature type="modified residue" description="Phosphoserine; alternate; by AURKB, AURKC and RPS6KA5" evidence="3">
    <location>
        <position position="29"/>
    </location>
</feature>
<feature type="modified residue" description="N6,N6,N6-trimethyllysine; alternate" evidence="2 9">
    <location>
        <position position="37"/>
    </location>
</feature>
<feature type="modified residue" description="N6,N6-dimethyllysine; alternate" evidence="2">
    <location>
        <position position="37"/>
    </location>
</feature>
<feature type="modified residue" description="N6-(2-hydroxyisobutyryl)lysine; alternate" evidence="2">
    <location>
        <position position="37"/>
    </location>
</feature>
<feature type="modified residue" description="N6-acetyllysine; alternate" evidence="2">
    <location>
        <position position="37"/>
    </location>
</feature>
<feature type="modified residue" description="N6-methyllysine; alternate" evidence="2">
    <location>
        <position position="37"/>
    </location>
</feature>
<feature type="modified residue" description="N6-methyllysine" evidence="2">
    <location>
        <position position="38"/>
    </location>
</feature>
<feature type="modified residue" description="Phosphotyrosine" evidence="2">
    <location>
        <position position="42"/>
    </location>
</feature>
<feature type="modified residue" description="N6,N6,N6-trimethyllysine; alternate" evidence="2">
    <location>
        <position position="57"/>
    </location>
</feature>
<feature type="modified residue" description="N6-(2-hydroxyisobutyryl)lysine; alternate" evidence="2">
    <location>
        <position position="57"/>
    </location>
</feature>
<feature type="modified residue" description="N6-(beta-hydroxybutyryl)lysine; alternate" evidence="4">
    <location>
        <position position="57"/>
    </location>
</feature>
<feature type="modified residue" description="N6-acetyllysine; alternate" evidence="2">
    <location>
        <position position="57"/>
    </location>
</feature>
<feature type="modified residue" description="N6-crotonyllysine; alternate" evidence="1">
    <location>
        <position position="57"/>
    </location>
</feature>
<feature type="modified residue" description="N6-glutaryllysine; alternate" evidence="2">
    <location>
        <position position="57"/>
    </location>
</feature>
<feature type="modified residue" description="N6-lactoyllysine; alternate" evidence="4">
    <location>
        <position position="57"/>
    </location>
</feature>
<feature type="modified residue" description="N6-methyllysine; by EHMT2; alternate" evidence="2">
    <location>
        <position position="57"/>
    </location>
</feature>
<feature type="modified residue" description="N6-succinyllysine; alternate" evidence="2">
    <location>
        <position position="57"/>
    </location>
</feature>
<feature type="modified residue" description="Phosphoserine" evidence="2">
    <location>
        <position position="58"/>
    </location>
</feature>
<feature type="modified residue" description="N6-(2-hydroxyisobutyryl)lysine; alternate" evidence="2">
    <location>
        <position position="65"/>
    </location>
</feature>
<feature type="modified residue" description="N6-methyllysine; alternate" evidence="2">
    <location>
        <position position="65"/>
    </location>
</feature>
<feature type="modified residue" description="N6,N6,N6-trimethyllysine; alternate" evidence="4">
    <location>
        <position position="80"/>
    </location>
</feature>
<feature type="modified residue" description="N6,N6-dimethyllysine; alternate" evidence="2">
    <location>
        <position position="80"/>
    </location>
</feature>
<feature type="modified residue" description="N6-(2-hydroxyisobutyryl)lysine; alternate" evidence="2">
    <location>
        <position position="80"/>
    </location>
</feature>
<feature type="modified residue" description="N6-acetyllysine; alternate" evidence="2">
    <location>
        <position position="80"/>
    </location>
</feature>
<feature type="modified residue" description="N6-glutaryllysine; alternate" evidence="2">
    <location>
        <position position="80"/>
    </location>
</feature>
<feature type="modified residue" description="N6-lactoyllysine; alternate" evidence="2">
    <location>
        <position position="80"/>
    </location>
</feature>
<feature type="modified residue" description="N6-methyllysine; alternate" evidence="2">
    <location>
        <position position="80"/>
    </location>
</feature>
<feature type="modified residue" description="N6-succinyllysine; alternate" evidence="2">
    <location>
        <position position="80"/>
    </location>
</feature>
<feature type="modified residue" description="Phosphothreonine" evidence="2">
    <location>
        <position position="81"/>
    </location>
</feature>
<feature type="modified residue" description="Phosphoserine" evidence="5">
    <location>
        <position position="87"/>
    </location>
</feature>
<feature type="modified residue" description="Phosphothreonine" evidence="7">
    <location>
        <position position="108"/>
    </location>
</feature>
<feature type="modified residue" description="N6-acetyllysine; alternate" evidence="2">
    <location>
        <position position="116"/>
    </location>
</feature>
<feature type="modified residue" description="N6-glutaryllysine; alternate" evidence="2">
    <location>
        <position position="116"/>
    </location>
</feature>
<feature type="modified residue" description="N6-(2-hydroxyisobutyryl)lysine; alternate" evidence="2">
    <location>
        <position position="123"/>
    </location>
</feature>
<feature type="modified residue" description="N6-acetyllysine; alternate" evidence="2">
    <location>
        <position position="123"/>
    </location>
</feature>
<feature type="modified residue" description="N6-glutaryllysine; alternate" evidence="2">
    <location>
        <position position="123"/>
    </location>
</feature>
<feature type="modified residue" description="N6-methyllysine; alternate" evidence="2">
    <location>
        <position position="123"/>
    </location>
</feature>
<feature type="modified residue" description="N6-succinyllysine; alternate" evidence="2">
    <location>
        <position position="123"/>
    </location>
</feature>
<feature type="lipid moiety-binding region" description="N6-decanoyllysine" evidence="2">
    <location>
        <position position="19"/>
    </location>
</feature>
<reference key="1">
    <citation type="journal article" date="1994" name="Genetics">
        <title>Selection on silent sites in the rodent histone H3 gene family.</title>
        <authorList>
            <person name="DeBry R.W."/>
            <person name="Marzluff W.F."/>
        </authorList>
    </citation>
    <scope>NUCLEOTIDE SEQUENCE [GENOMIC DNA]</scope>
</reference>
<accession>Q6LBF0</accession>
<evidence type="ECO:0000250" key="1"/>
<evidence type="ECO:0000250" key="2">
    <source>
        <dbReference type="UniProtKB" id="P68431"/>
    </source>
</evidence>
<evidence type="ECO:0000250" key="3">
    <source>
        <dbReference type="UniProtKB" id="P68432"/>
    </source>
</evidence>
<evidence type="ECO:0000250" key="4">
    <source>
        <dbReference type="UniProtKB" id="P68433"/>
    </source>
</evidence>
<evidence type="ECO:0000250" key="5">
    <source>
        <dbReference type="UniProtKB" id="P84243"/>
    </source>
</evidence>
<evidence type="ECO:0000250" key="6">
    <source>
        <dbReference type="UniProtKB" id="Q6LED0"/>
    </source>
</evidence>
<evidence type="ECO:0000250" key="7">
    <source>
        <dbReference type="UniProtKB" id="Q71DI3"/>
    </source>
</evidence>
<evidence type="ECO:0000256" key="8">
    <source>
        <dbReference type="SAM" id="MobiDB-lite"/>
    </source>
</evidence>
<evidence type="ECO:0000305" key="9"/>
<gene>
    <name type="primary">H3110</name>
</gene>
<gene>
    <name type="primary">H315</name>
</gene>
<organism>
    <name type="scientific">Mus pahari</name>
    <name type="common">Gairdner's shrew-mouse</name>
    <name type="synonym">Coelomys pahari</name>
    <dbReference type="NCBI Taxonomy" id="10093"/>
    <lineage>
        <taxon>Eukaryota</taxon>
        <taxon>Metazoa</taxon>
        <taxon>Chordata</taxon>
        <taxon>Craniata</taxon>
        <taxon>Vertebrata</taxon>
        <taxon>Euteleostomi</taxon>
        <taxon>Mammalia</taxon>
        <taxon>Eutheria</taxon>
        <taxon>Euarchontoglires</taxon>
        <taxon>Glires</taxon>
        <taxon>Rodentia</taxon>
        <taxon>Myomorpha</taxon>
        <taxon>Muroidea</taxon>
        <taxon>Muridae</taxon>
        <taxon>Murinae</taxon>
        <taxon>Mus</taxon>
        <taxon>Coelomys</taxon>
    </lineage>
</organism>
<comment type="function">
    <text>Core component of nucleosome. Nucleosomes wrap and compact DNA into chromatin, limiting DNA accessibility to the cellular machineries which require DNA as a template. Histones thereby play a central role in transcription regulation, DNA repair, DNA replication and chromosomal stability. DNA accessibility is regulated via a complex set of post-translational modifications of histones, also called histone code, and nucleosome remodeling.</text>
</comment>
<comment type="subunit">
    <text evidence="2">The nucleosome is a histone octamer containing two molecules each of H2A, H2B, H3 and H4 assembled in one H3-H4 heterotetramer and two H2A-H2B heterodimers. The octamer wraps approximately 147 bp of DNA. Interacts with TONSL; CHAF1A; CHAF1B; MCM2 and DNAJC9 (By similarity). Interacts wtih NASP; NASP is a histone chaperone that stabilizes and maintains a soluble pool of Histone H3-H4 dimers (By similarity).</text>
</comment>
<comment type="subcellular location">
    <subcellularLocation>
        <location>Nucleus</location>
    </subcellularLocation>
    <subcellularLocation>
        <location>Chromosome</location>
    </subcellularLocation>
</comment>
<comment type="developmental stage">
    <text>Expressed during S phase, then expression strongly decreases as cell division slows down during the process of differentiation.</text>
</comment>
<comment type="PTM">
    <text evidence="2">Acetylation is generally linked to gene activation. Acetylation on Lys-10 (H3K9ac) impairs methylation at Arg-9 (H3R8me2s). Acetylation on Lys-19 (H3K18ac) and Lys-24 (H3K24ac) favors methylation at Arg-18 (H3R17me). Acetylation at Lys-123 (H3K122ac) by EP300/p300 plays a central role in chromatin structure: localizes at the surface of the histone octamer and stimulates transcription, possibly by promoting nucleosome instability.</text>
</comment>
<comment type="PTM">
    <text evidence="2">Citrullination at Arg-9 (H3R8ci) and/or Arg-18 (H3R17ci) by PADI4 impairs methylation and represses transcription.</text>
</comment>
<comment type="PTM">
    <text evidence="2">Asymmetric dimethylation at Arg-18 (H3R17me2a) by CARM1 is linked to gene activation. Symmetric dimethylation at Arg-9 (H3R8me2s) by PRMT5 is linked to gene repression. Asymmetric dimethylation at Arg-3 (H3R2me2a) by PRMT6 is linked to gene repression and is mutually exclusive with H3 Lys-5 methylation (H3K4me2 and H3K4me3). H3R2me2a is present at the 3' of genes regardless of their transcription state and is enriched on inactive promoters, while it is absent on active promoters.</text>
</comment>
<comment type="PTM">
    <text evidence="2">Methylation at Lys-5 (H3K4me), Lys-37 (H3K36me) and Lys-80 (H3K79me) are linked to gene activation. Methylation at Lys-5 (H3K4me) facilitates subsequent acetylation of H3 and H4. Methylation at Lys-80 (H3K79me) is associated with DNA double-strand break (DSB) responses and is a specific target for TP53BP1. Methylation at Lys-10 (H3K9me) and Lys-28 (H3K27me) are linked to gene repression. Methylation at Lys-10 (H3K9me) is a specific target for HP1 proteins (CBX1, CBX3 and CBX5) and prevents subsequent phosphorylation at Ser-11 (H3S10ph) and acetylation of H3 and H4. Methylation at Lys-5 (H3K4me) and Lys-80 (H3K79me) require preliminary monoubiquitination of H2B at 'Lys-120'. Methylation at Lys-10 (H3K9me) and Lys-28 (H3K27me) are enriched in inactive X chromosome chromatin. Monomethylation at Lys-57 (H3K56me1) by EHMT2/G9A in G1 phase promotes interaction with PCNA and is required for DNA replication.</text>
</comment>
<comment type="PTM">
    <text evidence="2">Phosphorylated at Thr-4 (H3T3ph) by VRK1. Phosphorylated at Thr-4 (H3T3ph) by HASPIN during prophase and dephosphorylated during anaphase. Phosphorylation at Ser-11 (H3S10ph) by AURKB is crucial for chromosome condensation and cell-cycle progression during mitosis and meiosis. In addition phosphorylation at Ser-11 (H3S10ph) by RPS6KA4 and RPS6KA5 is important during interphase because it enables the transcription of genes following external stimulation, like mitogens, stress, growth factors or UV irradiation and result in the activation of genes, such as c-fos and c-jun. Phosphorylation at Ser-11 (H3S10ph), which is linked to gene activation, prevents methylation at Lys-10 (H3K9me) but facilitates acetylation of H3 and H4. Phosphorylation at Ser-11 (H3S10ph) by AURKB mediates the dissociation of HP1 proteins (CBX1, CBX3 and CBX5) from heterochromatin. Phosphorylation at Ser-11 (H3S10ph) is also an essential regulatory mechanism for neoplastic cell transformation. Phosphorylated at Ser-29 (H3S28ph) by MAP3K20 isoform 1, RPS6KA5 or AURKB during mitosis or upon ultraviolet B irradiation. Phosphorylation at Thr-7 (H3T6ph) by PRKCB is a specific tag for epigenetic transcriptional activation that prevents demethylation of Lys-5 (H3K4me) by LSD1/KDM1A. At centromeres, specifically phosphorylated at Thr-12 (H3T11ph) from prophase to early anaphase, by DAPK3 and PKN1. Phosphorylation at Thr-12 (H3T11ph) by PKN1 or isoform M2 of PKM (PKM2) is a specific tag for epigenetic transcriptional activation that promotes demethylation of Lys-10 (H3K9me) by KDM4C/JMJD2C. Phosphorylation at Thr-12 (H3T11ph) by chromatin-associated CHEK1 regulates the transcription of cell cycle regulatory genes by modulating acetylation of Lys-10 (H3K9ac). Phosphorylation at Tyr-42 (H3Y41ph) by JAK2 promotes exclusion of CBX5 (HP1 alpha) from chromatin.</text>
</comment>
<comment type="PTM">
    <text evidence="1 2">Monoubiquitinated by RAG1 in lymphoid cells, monoubiquitination is required for V(D)J recombination (By similarity). Ubiquitinated by the CUL4-DDB-RBX1 complex in response to ultraviolet irradiation. This may weaken the interaction between histones and DNA and facilitate DNA accessibility to repair proteins (By similarity).</text>
</comment>
<comment type="PTM">
    <text evidence="2">Lysine deamination at Lys-5 (H3K4all) to form allysine is mediated by LOXL2. Allysine formation by LOXL2 only takes place on H3K4me3 and results in gene repression.</text>
</comment>
<comment type="PTM">
    <text evidence="2">Crotonylation (Kcr) is specifically present in male germ cells and marks testis-specific genes in post-meiotic cells, including X-linked genes that escape sex chromosome inactivation in haploid cells. Crotonylation marks active promoters and enhancers and confers resistance to transcriptional repressors. It is also associated with post-meiotically activated genes on autosomes.</text>
</comment>
<comment type="PTM">
    <text evidence="4">Butyrylation of histones marks active promoters and competes with histone acetylation. It is present during late spermatogenesis.</text>
</comment>
<comment type="PTM">
    <text evidence="2">Succinylation at Lys-80 (H3K79succ) by KAT2A takes place with a maximum frequency around the transcription start sites of genes. It gives a specific tag for epigenetic transcription activation. Desuccinylation at Lys-123 (H3K122succ) by SIRT7 in response to DNA damage promotes chromatin condensation and double-strand breaks (DSBs) repair.</text>
</comment>
<comment type="PTM">
    <text evidence="2">Serine ADP-ribosylation by PARP1 or PARP2 constitutes the primary form of ADP-ribosylation of proteins in response to DNA damage. Serine ADP-ribosylation at Ser-11 (H3S10ADPr) promotes recruitment of CHD1L. H3S10ADPr is mutually exclusive with phosphorylation at Ser-11 (H3S10ph) and impairs acetylation at Lys-10 (H3K9ac).</text>
</comment>
<comment type="PTM">
    <text evidence="2">Serotonylated by TGM2 at Gln-6 (H3Q5ser) during serotonergic neuron differentiation (By similarity). H3Q5ser is associated with trimethylation of Lys-5 (H3K4me3) and enhances general transcription factor IID (TFIID) complex-binding to H3K4me3, thereby facilitating transcription (By similarity).</text>
</comment>
<comment type="PTM">
    <text evidence="2 6">Dopaminylated by TGM2 at Gln-6 (H3Q5dop) in ventral tegmental area (VTA) neurons (By similarity). H3Q5dop mediates neurotransmission-independent role of nuclear dopamine by regulating relapse-related transcriptional plasticity in the reward system (By similarity).</text>
</comment>
<comment type="PTM">
    <text evidence="2">Lactylated in macrophages by EP300/P300 by using lactoyl-CoA directly derived from endogenous or exogenous lactate, leading to stimulates gene transcription.</text>
</comment>
<comment type="miscellaneous">
    <text>This histone is only present in mammals.</text>
</comment>
<comment type="similarity">
    <text evidence="9">Belongs to the histone H3 family.</text>
</comment>
<protein>
    <recommendedName>
        <fullName>Histone H3.1</fullName>
    </recommendedName>
</protein>
<proteinExistence type="evidence at transcript level"/>
<name>H31_MUSPA</name>
<dbReference type="EMBL" id="X80324">
    <property type="protein sequence ID" value="CAA56571.1"/>
    <property type="molecule type" value="Genomic_DNA"/>
</dbReference>
<dbReference type="EMBL" id="X80325">
    <property type="protein sequence ID" value="CAA56572.1"/>
    <property type="molecule type" value="Genomic_DNA"/>
</dbReference>
<dbReference type="SMR" id="Q6LBF0"/>
<dbReference type="GO" id="GO:0000786">
    <property type="term" value="C:nucleosome"/>
    <property type="evidence" value="ECO:0007669"/>
    <property type="project" value="UniProtKB-KW"/>
</dbReference>
<dbReference type="GO" id="GO:0005634">
    <property type="term" value="C:nucleus"/>
    <property type="evidence" value="ECO:0000250"/>
    <property type="project" value="UniProtKB"/>
</dbReference>
<dbReference type="GO" id="GO:0003677">
    <property type="term" value="F:DNA binding"/>
    <property type="evidence" value="ECO:0007669"/>
    <property type="project" value="UniProtKB-KW"/>
</dbReference>
<dbReference type="GO" id="GO:0046982">
    <property type="term" value="F:protein heterodimerization activity"/>
    <property type="evidence" value="ECO:0007669"/>
    <property type="project" value="InterPro"/>
</dbReference>
<dbReference type="GO" id="GO:0030527">
    <property type="term" value="F:structural constituent of chromatin"/>
    <property type="evidence" value="ECO:0007669"/>
    <property type="project" value="InterPro"/>
</dbReference>
<dbReference type="CDD" id="cd22911">
    <property type="entry name" value="HFD_H3"/>
    <property type="match status" value="1"/>
</dbReference>
<dbReference type="FunFam" id="1.10.20.10:FF:000078">
    <property type="entry name" value="Histone H3"/>
    <property type="match status" value="1"/>
</dbReference>
<dbReference type="FunFam" id="1.10.20.10:FF:000044">
    <property type="entry name" value="Histone H3.3"/>
    <property type="match status" value="1"/>
</dbReference>
<dbReference type="Gene3D" id="1.10.20.10">
    <property type="entry name" value="Histone, subunit A"/>
    <property type="match status" value="1"/>
</dbReference>
<dbReference type="InterPro" id="IPR009072">
    <property type="entry name" value="Histone-fold"/>
</dbReference>
<dbReference type="InterPro" id="IPR007125">
    <property type="entry name" value="Histone_H2A/H2B/H3"/>
</dbReference>
<dbReference type="InterPro" id="IPR000164">
    <property type="entry name" value="Histone_H3/CENP-A"/>
</dbReference>
<dbReference type="PANTHER" id="PTHR11426">
    <property type="entry name" value="HISTONE H3"/>
    <property type="match status" value="1"/>
</dbReference>
<dbReference type="Pfam" id="PF00125">
    <property type="entry name" value="Histone"/>
    <property type="match status" value="1"/>
</dbReference>
<dbReference type="PRINTS" id="PR00622">
    <property type="entry name" value="HISTONEH3"/>
</dbReference>
<dbReference type="SMART" id="SM00428">
    <property type="entry name" value="H3"/>
    <property type="match status" value="1"/>
</dbReference>
<dbReference type="SUPFAM" id="SSF47113">
    <property type="entry name" value="Histone-fold"/>
    <property type="match status" value="1"/>
</dbReference>
<dbReference type="PROSITE" id="PS00322">
    <property type="entry name" value="HISTONE_H3_1"/>
    <property type="match status" value="1"/>
</dbReference>
<dbReference type="PROSITE" id="PS00959">
    <property type="entry name" value="HISTONE_H3_2"/>
    <property type="match status" value="1"/>
</dbReference>
<keyword id="KW-0007">Acetylation</keyword>
<keyword id="KW-0013">ADP-ribosylation</keyword>
<keyword id="KW-0158">Chromosome</keyword>
<keyword id="KW-0164">Citrullination</keyword>
<keyword id="KW-0238">DNA-binding</keyword>
<keyword id="KW-0379">Hydroxylation</keyword>
<keyword id="KW-0449">Lipoprotein</keyword>
<keyword id="KW-0488">Methylation</keyword>
<keyword id="KW-0544">Nucleosome core</keyword>
<keyword id="KW-0539">Nucleus</keyword>
<keyword id="KW-0597">Phosphoprotein</keyword>
<keyword id="KW-0832">Ubl conjugation</keyword>
<sequence length="136" mass="15404">MARTKQTARKSTGGKAPRKQLATKAARKSAPATGGVKKPHRYRPGTVALREIRRYQKSTELLIRKLPFQRLVREIAQDFKTDLRFQSSAVMALQEACEAYLVGLFEDTNLCAIHAKRVTIMPKDIQLARRIRGERA</sequence>